<gene>
    <name evidence="4" type="primary">maeN</name>
    <name type="synonym">yufR</name>
    <name type="ordered locus">BSU31580</name>
</gene>
<organism>
    <name type="scientific">Bacillus subtilis (strain 168)</name>
    <dbReference type="NCBI Taxonomy" id="224308"/>
    <lineage>
        <taxon>Bacteria</taxon>
        <taxon>Bacillati</taxon>
        <taxon>Bacillota</taxon>
        <taxon>Bacilli</taxon>
        <taxon>Bacillales</taxon>
        <taxon>Bacillaceae</taxon>
        <taxon>Bacillus</taxon>
    </lineage>
</organism>
<feature type="chain" id="PRO_0000088762" description="Na(+)-malate symporter">
    <location>
        <begin position="1"/>
        <end position="448"/>
    </location>
</feature>
<feature type="transmembrane region" description="Helical" evidence="1">
    <location>
        <begin position="31"/>
        <end position="51"/>
    </location>
</feature>
<feature type="transmembrane region" description="Helical" evidence="1">
    <location>
        <begin position="60"/>
        <end position="80"/>
    </location>
</feature>
<feature type="transmembrane region" description="Helical" evidence="1">
    <location>
        <begin position="86"/>
        <end position="106"/>
    </location>
</feature>
<feature type="transmembrane region" description="Helical" evidence="1">
    <location>
        <begin position="123"/>
        <end position="143"/>
    </location>
</feature>
<feature type="transmembrane region" description="Helical" evidence="1">
    <location>
        <begin position="153"/>
        <end position="173"/>
    </location>
</feature>
<feature type="transmembrane region" description="Helical" evidence="1">
    <location>
        <begin position="182"/>
        <end position="202"/>
    </location>
</feature>
<feature type="transmembrane region" description="Helical" evidence="1">
    <location>
        <begin position="214"/>
        <end position="234"/>
    </location>
</feature>
<feature type="transmembrane region" description="Helical" evidence="1">
    <location>
        <begin position="276"/>
        <end position="293"/>
    </location>
</feature>
<feature type="transmembrane region" description="Helical" evidence="1">
    <location>
        <begin position="297"/>
        <end position="319"/>
    </location>
</feature>
<feature type="transmembrane region" description="Helical" evidence="1">
    <location>
        <begin position="333"/>
        <end position="353"/>
    </location>
</feature>
<feature type="transmembrane region" description="Helical" evidence="1">
    <location>
        <begin position="359"/>
        <end position="379"/>
    </location>
</feature>
<dbReference type="EMBL" id="Z93937">
    <property type="protein sequence ID" value="CAB07940.1"/>
    <property type="molecule type" value="Genomic_DNA"/>
</dbReference>
<dbReference type="EMBL" id="AL009126">
    <property type="protein sequence ID" value="CAB15147.1"/>
    <property type="molecule type" value="Genomic_DNA"/>
</dbReference>
<dbReference type="PIR" id="G70009">
    <property type="entry name" value="G70009"/>
</dbReference>
<dbReference type="RefSeq" id="NP_391036.1">
    <property type="nucleotide sequence ID" value="NC_000964.3"/>
</dbReference>
<dbReference type="RefSeq" id="WP_003244241.1">
    <property type="nucleotide sequence ID" value="NZ_OZ025638.1"/>
</dbReference>
<dbReference type="SMR" id="O05256"/>
<dbReference type="FunCoup" id="O05256">
    <property type="interactions" value="130"/>
</dbReference>
<dbReference type="STRING" id="224308.BSU31580"/>
<dbReference type="TCDB" id="2.A.24.2.3">
    <property type="family name" value="the 2-hydroxycarboxylate transporter (2-hct) family"/>
</dbReference>
<dbReference type="PaxDb" id="224308-BSU31580"/>
<dbReference type="EnsemblBacteria" id="CAB15147">
    <property type="protein sequence ID" value="CAB15147"/>
    <property type="gene ID" value="BSU_31580"/>
</dbReference>
<dbReference type="GeneID" id="938855"/>
<dbReference type="KEGG" id="bsu:BSU31580"/>
<dbReference type="PATRIC" id="fig|224308.43.peg.3306"/>
<dbReference type="eggNOG" id="COG3493">
    <property type="taxonomic scope" value="Bacteria"/>
</dbReference>
<dbReference type="InParanoid" id="O05256"/>
<dbReference type="OrthoDB" id="8584824at2"/>
<dbReference type="PhylomeDB" id="O05256"/>
<dbReference type="BioCyc" id="BSUB:BSU31580-MONOMER"/>
<dbReference type="Proteomes" id="UP000001570">
    <property type="component" value="Chromosome"/>
</dbReference>
<dbReference type="GO" id="GO:0005886">
    <property type="term" value="C:plasma membrane"/>
    <property type="evidence" value="ECO:0007669"/>
    <property type="project" value="UniProtKB-SubCell"/>
</dbReference>
<dbReference type="GO" id="GO:0008514">
    <property type="term" value="F:organic anion transmembrane transporter activity"/>
    <property type="evidence" value="ECO:0007669"/>
    <property type="project" value="InterPro"/>
</dbReference>
<dbReference type="GO" id="GO:0015293">
    <property type="term" value="F:symporter activity"/>
    <property type="evidence" value="ECO:0007669"/>
    <property type="project" value="UniProtKB-KW"/>
</dbReference>
<dbReference type="GO" id="GO:0006814">
    <property type="term" value="P:sodium ion transport"/>
    <property type="evidence" value="ECO:0007669"/>
    <property type="project" value="UniProtKB-KW"/>
</dbReference>
<dbReference type="InterPro" id="IPR018025">
    <property type="entry name" value="2-OHcarbox_trans_Prot/Firm"/>
</dbReference>
<dbReference type="InterPro" id="IPR004679">
    <property type="entry name" value="2-OHcarboxylate_transport"/>
</dbReference>
<dbReference type="NCBIfam" id="TIGR00783">
    <property type="entry name" value="ccs"/>
    <property type="match status" value="1"/>
</dbReference>
<dbReference type="PANTHER" id="PTHR40033:SF1">
    <property type="entry name" value="CITRATE-SODIUM SYMPORTER"/>
    <property type="match status" value="1"/>
</dbReference>
<dbReference type="PANTHER" id="PTHR40033">
    <property type="entry name" value="NA(+)-MALATE SYMPORTER"/>
    <property type="match status" value="1"/>
</dbReference>
<dbReference type="Pfam" id="PF03390">
    <property type="entry name" value="2HCT"/>
    <property type="match status" value="1"/>
</dbReference>
<dbReference type="PIRSF" id="PIRSF005348">
    <property type="entry name" value="YxkH"/>
    <property type="match status" value="1"/>
</dbReference>
<name>MAEN_BACSU</name>
<proteinExistence type="evidence at transcript level"/>
<reference key="1">
    <citation type="journal article" date="1997" name="Microbiology">
        <title>Analysis of the Bacillus subtilis genome: cloning and nucleotide sequence of a 62 kb region between 275 degrees (rrnB) and 284 degrees (pai).</title>
        <authorList>
            <person name="Oudega B."/>
            <person name="Koningstein G."/>
            <person name="Rodrigues L."/>
            <person name="de Sales Ramon M."/>
            <person name="Hilbert H."/>
            <person name="Duesterhoeft A."/>
            <person name="Pohl T.M."/>
            <person name="Weitzenegger T."/>
        </authorList>
    </citation>
    <scope>NUCLEOTIDE SEQUENCE [GENOMIC DNA]</scope>
    <source>
        <strain>168</strain>
    </source>
</reference>
<reference key="2">
    <citation type="journal article" date="1997" name="Nature">
        <title>The complete genome sequence of the Gram-positive bacterium Bacillus subtilis.</title>
        <authorList>
            <person name="Kunst F."/>
            <person name="Ogasawara N."/>
            <person name="Moszer I."/>
            <person name="Albertini A.M."/>
            <person name="Alloni G."/>
            <person name="Azevedo V."/>
            <person name="Bertero M.G."/>
            <person name="Bessieres P."/>
            <person name="Bolotin A."/>
            <person name="Borchert S."/>
            <person name="Borriss R."/>
            <person name="Boursier L."/>
            <person name="Brans A."/>
            <person name="Braun M."/>
            <person name="Brignell S.C."/>
            <person name="Bron S."/>
            <person name="Brouillet S."/>
            <person name="Bruschi C.V."/>
            <person name="Caldwell B."/>
            <person name="Capuano V."/>
            <person name="Carter N.M."/>
            <person name="Choi S.-K."/>
            <person name="Codani J.-J."/>
            <person name="Connerton I.F."/>
            <person name="Cummings N.J."/>
            <person name="Daniel R.A."/>
            <person name="Denizot F."/>
            <person name="Devine K.M."/>
            <person name="Duesterhoeft A."/>
            <person name="Ehrlich S.D."/>
            <person name="Emmerson P.T."/>
            <person name="Entian K.-D."/>
            <person name="Errington J."/>
            <person name="Fabret C."/>
            <person name="Ferrari E."/>
            <person name="Foulger D."/>
            <person name="Fritz C."/>
            <person name="Fujita M."/>
            <person name="Fujita Y."/>
            <person name="Fuma S."/>
            <person name="Galizzi A."/>
            <person name="Galleron N."/>
            <person name="Ghim S.-Y."/>
            <person name="Glaser P."/>
            <person name="Goffeau A."/>
            <person name="Golightly E.J."/>
            <person name="Grandi G."/>
            <person name="Guiseppi G."/>
            <person name="Guy B.J."/>
            <person name="Haga K."/>
            <person name="Haiech J."/>
            <person name="Harwood C.R."/>
            <person name="Henaut A."/>
            <person name="Hilbert H."/>
            <person name="Holsappel S."/>
            <person name="Hosono S."/>
            <person name="Hullo M.-F."/>
            <person name="Itaya M."/>
            <person name="Jones L.-M."/>
            <person name="Joris B."/>
            <person name="Karamata D."/>
            <person name="Kasahara Y."/>
            <person name="Klaerr-Blanchard M."/>
            <person name="Klein C."/>
            <person name="Kobayashi Y."/>
            <person name="Koetter P."/>
            <person name="Koningstein G."/>
            <person name="Krogh S."/>
            <person name="Kumano M."/>
            <person name="Kurita K."/>
            <person name="Lapidus A."/>
            <person name="Lardinois S."/>
            <person name="Lauber J."/>
            <person name="Lazarevic V."/>
            <person name="Lee S.-M."/>
            <person name="Levine A."/>
            <person name="Liu H."/>
            <person name="Masuda S."/>
            <person name="Mauel C."/>
            <person name="Medigue C."/>
            <person name="Medina N."/>
            <person name="Mellado R.P."/>
            <person name="Mizuno M."/>
            <person name="Moestl D."/>
            <person name="Nakai S."/>
            <person name="Noback M."/>
            <person name="Noone D."/>
            <person name="O'Reilly M."/>
            <person name="Ogawa K."/>
            <person name="Ogiwara A."/>
            <person name="Oudega B."/>
            <person name="Park S.-H."/>
            <person name="Parro V."/>
            <person name="Pohl T.M."/>
            <person name="Portetelle D."/>
            <person name="Porwollik S."/>
            <person name="Prescott A.M."/>
            <person name="Presecan E."/>
            <person name="Pujic P."/>
            <person name="Purnelle B."/>
            <person name="Rapoport G."/>
            <person name="Rey M."/>
            <person name="Reynolds S."/>
            <person name="Rieger M."/>
            <person name="Rivolta C."/>
            <person name="Rocha E."/>
            <person name="Roche B."/>
            <person name="Rose M."/>
            <person name="Sadaie Y."/>
            <person name="Sato T."/>
            <person name="Scanlan E."/>
            <person name="Schleich S."/>
            <person name="Schroeter R."/>
            <person name="Scoffone F."/>
            <person name="Sekiguchi J."/>
            <person name="Sekowska A."/>
            <person name="Seror S.J."/>
            <person name="Serror P."/>
            <person name="Shin B.-S."/>
            <person name="Soldo B."/>
            <person name="Sorokin A."/>
            <person name="Tacconi E."/>
            <person name="Takagi T."/>
            <person name="Takahashi H."/>
            <person name="Takemaru K."/>
            <person name="Takeuchi M."/>
            <person name="Tamakoshi A."/>
            <person name="Tanaka T."/>
            <person name="Terpstra P."/>
            <person name="Tognoni A."/>
            <person name="Tosato V."/>
            <person name="Uchiyama S."/>
            <person name="Vandenbol M."/>
            <person name="Vannier F."/>
            <person name="Vassarotti A."/>
            <person name="Viari A."/>
            <person name="Wambutt R."/>
            <person name="Wedler E."/>
            <person name="Wedler H."/>
            <person name="Weitzenegger T."/>
            <person name="Winters P."/>
            <person name="Wipat A."/>
            <person name="Yamamoto H."/>
            <person name="Yamane K."/>
            <person name="Yasumoto K."/>
            <person name="Yata K."/>
            <person name="Yoshida K."/>
            <person name="Yoshikawa H.-F."/>
            <person name="Zumstein E."/>
            <person name="Yoshikawa H."/>
            <person name="Danchin A."/>
        </authorList>
    </citation>
    <scope>NUCLEOTIDE SEQUENCE [LARGE SCALE GENOMIC DNA]</scope>
    <source>
        <strain>168</strain>
    </source>
</reference>
<reference key="3">
    <citation type="journal article" date="2000" name="J. Biol. Chem.">
        <title>Bacillus subtilis YqkI is a novel malic/Na+-lactate antiporter that enhances growth on malate at low protonmotive force.</title>
        <authorList>
            <person name="Wei Y."/>
            <person name="Guffanti A.A."/>
            <person name="Ito M."/>
            <person name="Krulwich T.A."/>
        </authorList>
    </citation>
    <scope>FUNCTION</scope>
</reference>
<reference key="4">
    <citation type="journal article" date="2003" name="Microbiology">
        <title>The Bacillus subtilis YufLM two-component system regulates the expression of the malate transporters MaeN (YufR) and YflS, and is essential for utilization of malate in minimal medium.</title>
        <authorList>
            <person name="Tanaka K."/>
            <person name="Kobayashi K."/>
            <person name="Ogasawara N."/>
        </authorList>
    </citation>
    <scope>REGULATION BY MALK/MALR</scope>
</reference>
<keyword id="KW-1003">Cell membrane</keyword>
<keyword id="KW-0406">Ion transport</keyword>
<keyword id="KW-0472">Membrane</keyword>
<keyword id="KW-1185">Reference proteome</keyword>
<keyword id="KW-0915">Sodium</keyword>
<keyword id="KW-0739">Sodium transport</keyword>
<keyword id="KW-0769">Symport</keyword>
<keyword id="KW-0812">Transmembrane</keyword>
<keyword id="KW-1133">Transmembrane helix</keyword>
<keyword id="KW-0813">Transport</keyword>
<evidence type="ECO:0000255" key="1"/>
<evidence type="ECO:0000269" key="2">
    <source>
    </source>
</evidence>
<evidence type="ECO:0000269" key="3">
    <source>
    </source>
</evidence>
<evidence type="ECO:0000303" key="4">
    <source>
    </source>
</evidence>
<evidence type="ECO:0000305" key="5"/>
<protein>
    <recommendedName>
        <fullName evidence="4">Na(+)-malate symporter</fullName>
    </recommendedName>
    <alternativeName>
        <fullName>Sodium-dependent malate transporter</fullName>
    </alternativeName>
</protein>
<comment type="function">
    <text evidence="2">Acts as a Na(+)-malate symporter, as it catalyzes malate-dependent uptake of Na(+) and Na(+)-dependent uptake of malate.</text>
</comment>
<comment type="subcellular location">
    <subcellularLocation>
        <location evidence="5">Cell membrane</location>
        <topology evidence="1">Multi-pass membrane protein</topology>
    </subcellularLocation>
</comment>
<comment type="induction">
    <text evidence="3">Expression is induced by the two-component regulatory system MalK/MalR in response to malate (PubMed:12949159). The regulator MalR binds to the promoter region of maeN (PubMed:12949159).</text>
</comment>
<comment type="similarity">
    <text evidence="5">Belongs to the 2-hydroxycarboxylate transporter (2-HCT) (TC 2.A.24) family.</text>
</comment>
<accession>O05256</accession>
<sequence length="448" mass="47824">MGAIPKTGTISPEQKDSQEKNLFQKIWSWEIGVIPLPLYTVLAVIIILAAYYNELPANMLGGFAIIMILGVFLGDIGQRIPILKDIGGPAILSLFVPSFLVFYNVLNSTSLDAVTNLMKTSNFLYFYIACLVVGSILGMNRIVLIQGFIRMFVPLVAGTIAAVAAGILVGFIFGYSAYDSFFFVVVPIIAGGIGEGILPLSIAYSQILGSSADVFVSQLVPAAIIGNVFAIICAALMKKLGDKRPDLNGNGRLVKSKKANEIFNQKEAEAKIDFKLMGAGVLLACTFFIFGGLLEKFIFIPGAILMIISAAAVKYANILPKKMEEGAYQLYKFISSSFTWPLMVGLGILFIPLDDVASVISIPFVIICISVVIAMIGSGYFVGKLMNMYPVESAIVTCCHSGLGGTGDVAILSASGRMGLMPFAQISTRLGGAGTVICATVLLRFFTS</sequence>